<dbReference type="EC" id="1.3.5.2" evidence="1"/>
<dbReference type="EMBL" id="AE016827">
    <property type="protein sequence ID" value="AAU37642.1"/>
    <property type="molecule type" value="Genomic_DNA"/>
</dbReference>
<dbReference type="RefSeq" id="WP_011200211.1">
    <property type="nucleotide sequence ID" value="NC_006300.1"/>
</dbReference>
<dbReference type="SMR" id="Q65TR8"/>
<dbReference type="STRING" id="221988.MS1035"/>
<dbReference type="KEGG" id="msu:MS1035"/>
<dbReference type="eggNOG" id="COG0167">
    <property type="taxonomic scope" value="Bacteria"/>
</dbReference>
<dbReference type="HOGENOM" id="CLU_013640_2_0_6"/>
<dbReference type="OrthoDB" id="9802377at2"/>
<dbReference type="UniPathway" id="UPA00070">
    <property type="reaction ID" value="UER00946"/>
</dbReference>
<dbReference type="Proteomes" id="UP000000607">
    <property type="component" value="Chromosome"/>
</dbReference>
<dbReference type="GO" id="GO:0005737">
    <property type="term" value="C:cytoplasm"/>
    <property type="evidence" value="ECO:0007669"/>
    <property type="project" value="InterPro"/>
</dbReference>
<dbReference type="GO" id="GO:0005886">
    <property type="term" value="C:plasma membrane"/>
    <property type="evidence" value="ECO:0007669"/>
    <property type="project" value="UniProtKB-SubCell"/>
</dbReference>
<dbReference type="GO" id="GO:0106430">
    <property type="term" value="F:dihydroorotate dehydrogenase (quinone) activity"/>
    <property type="evidence" value="ECO:0007669"/>
    <property type="project" value="UniProtKB-EC"/>
</dbReference>
<dbReference type="GO" id="GO:0006207">
    <property type="term" value="P:'de novo' pyrimidine nucleobase biosynthetic process"/>
    <property type="evidence" value="ECO:0007669"/>
    <property type="project" value="InterPro"/>
</dbReference>
<dbReference type="GO" id="GO:0044205">
    <property type="term" value="P:'de novo' UMP biosynthetic process"/>
    <property type="evidence" value="ECO:0007669"/>
    <property type="project" value="UniProtKB-UniRule"/>
</dbReference>
<dbReference type="CDD" id="cd04738">
    <property type="entry name" value="DHOD_2_like"/>
    <property type="match status" value="1"/>
</dbReference>
<dbReference type="FunFam" id="3.20.20.70:FF:000028">
    <property type="entry name" value="Dihydroorotate dehydrogenase (quinone)"/>
    <property type="match status" value="1"/>
</dbReference>
<dbReference type="Gene3D" id="3.20.20.70">
    <property type="entry name" value="Aldolase class I"/>
    <property type="match status" value="1"/>
</dbReference>
<dbReference type="HAMAP" id="MF_00225">
    <property type="entry name" value="DHO_dh_type2"/>
    <property type="match status" value="1"/>
</dbReference>
<dbReference type="InterPro" id="IPR013785">
    <property type="entry name" value="Aldolase_TIM"/>
</dbReference>
<dbReference type="InterPro" id="IPR050074">
    <property type="entry name" value="DHO_dehydrogenase"/>
</dbReference>
<dbReference type="InterPro" id="IPR012135">
    <property type="entry name" value="Dihydroorotate_DH_1_2"/>
</dbReference>
<dbReference type="InterPro" id="IPR005719">
    <property type="entry name" value="Dihydroorotate_DH_2"/>
</dbReference>
<dbReference type="InterPro" id="IPR005720">
    <property type="entry name" value="Dihydroorotate_DH_cat"/>
</dbReference>
<dbReference type="InterPro" id="IPR001295">
    <property type="entry name" value="Dihydroorotate_DH_CS"/>
</dbReference>
<dbReference type="NCBIfam" id="NF003644">
    <property type="entry name" value="PRK05286.1-1"/>
    <property type="match status" value="1"/>
</dbReference>
<dbReference type="NCBIfam" id="NF003646">
    <property type="entry name" value="PRK05286.1-4"/>
    <property type="match status" value="1"/>
</dbReference>
<dbReference type="NCBIfam" id="NF003652">
    <property type="entry name" value="PRK05286.2-5"/>
    <property type="match status" value="1"/>
</dbReference>
<dbReference type="NCBIfam" id="TIGR01036">
    <property type="entry name" value="pyrD_sub2"/>
    <property type="match status" value="1"/>
</dbReference>
<dbReference type="PANTHER" id="PTHR48109:SF4">
    <property type="entry name" value="DIHYDROOROTATE DEHYDROGENASE (QUINONE), MITOCHONDRIAL"/>
    <property type="match status" value="1"/>
</dbReference>
<dbReference type="PANTHER" id="PTHR48109">
    <property type="entry name" value="DIHYDROOROTATE DEHYDROGENASE (QUINONE), MITOCHONDRIAL-RELATED"/>
    <property type="match status" value="1"/>
</dbReference>
<dbReference type="Pfam" id="PF01180">
    <property type="entry name" value="DHO_dh"/>
    <property type="match status" value="1"/>
</dbReference>
<dbReference type="PIRSF" id="PIRSF000164">
    <property type="entry name" value="DHO_oxidase"/>
    <property type="match status" value="1"/>
</dbReference>
<dbReference type="SUPFAM" id="SSF51395">
    <property type="entry name" value="FMN-linked oxidoreductases"/>
    <property type="match status" value="1"/>
</dbReference>
<dbReference type="PROSITE" id="PS00911">
    <property type="entry name" value="DHODEHASE_1"/>
    <property type="match status" value="1"/>
</dbReference>
<dbReference type="PROSITE" id="PS00912">
    <property type="entry name" value="DHODEHASE_2"/>
    <property type="match status" value="1"/>
</dbReference>
<sequence length="340" mass="36841">MLYPLIRKGIFALEPENAHDLAIKMLHLAGNPILNKLLKALLACPSGNEKTVMGIKFKNPIGLAAGADKNGDAIDGFGAMGFGFIEVGTVTPLAQDGNAKPRQFRIVEAEGIVNRNGFNNYGVDYLVENVKKAKFDGVIGINIGKNKVTPVERGKDDYIFCLNKAYNYAGYITVNISSPNTPGLRQLQYGDALDDLLKSIKERQAYLAQVYNKYVPIAVKIAPDQTEEELVQIADTLRRHKMDGVIATNTTISRDTVAGMKNADQTGGLSGKPLQHKSTEIIRRLQQELKGEIPIIGSGGIDGVQNAQEKIVAGAELLQVYSGLIYHGPGLVKALVEAIR</sequence>
<comment type="function">
    <text evidence="1">Catalyzes the conversion of dihydroorotate to orotate with quinone as electron acceptor.</text>
</comment>
<comment type="catalytic activity">
    <reaction evidence="1">
        <text>(S)-dihydroorotate + a quinone = orotate + a quinol</text>
        <dbReference type="Rhea" id="RHEA:30187"/>
        <dbReference type="ChEBI" id="CHEBI:24646"/>
        <dbReference type="ChEBI" id="CHEBI:30839"/>
        <dbReference type="ChEBI" id="CHEBI:30864"/>
        <dbReference type="ChEBI" id="CHEBI:132124"/>
        <dbReference type="EC" id="1.3.5.2"/>
    </reaction>
</comment>
<comment type="cofactor">
    <cofactor evidence="1">
        <name>FMN</name>
        <dbReference type="ChEBI" id="CHEBI:58210"/>
    </cofactor>
    <text evidence="1">Binds 1 FMN per subunit.</text>
</comment>
<comment type="pathway">
    <text evidence="1">Pyrimidine metabolism; UMP biosynthesis via de novo pathway; orotate from (S)-dihydroorotate (quinone route): step 1/1.</text>
</comment>
<comment type="subunit">
    <text evidence="1">Monomer.</text>
</comment>
<comment type="subcellular location">
    <subcellularLocation>
        <location evidence="1">Cell membrane</location>
        <topology evidence="1">Peripheral membrane protein</topology>
    </subcellularLocation>
</comment>
<comment type="similarity">
    <text evidence="1">Belongs to the dihydroorotate dehydrogenase family. Type 2 subfamily.</text>
</comment>
<proteinExistence type="inferred from homology"/>
<reference key="1">
    <citation type="journal article" date="2004" name="Nat. Biotechnol.">
        <title>The genome sequence of the capnophilic rumen bacterium Mannheimia succiniciproducens.</title>
        <authorList>
            <person name="Hong S.H."/>
            <person name="Kim J.S."/>
            <person name="Lee S.Y."/>
            <person name="In Y.H."/>
            <person name="Choi S.S."/>
            <person name="Rih J.-K."/>
            <person name="Kim C.H."/>
            <person name="Jeong H."/>
            <person name="Hur C.G."/>
            <person name="Kim J.J."/>
        </authorList>
    </citation>
    <scope>NUCLEOTIDE SEQUENCE [LARGE SCALE GENOMIC DNA]</scope>
    <source>
        <strain>KCTC 0769BP / MBEL55E</strain>
    </source>
</reference>
<feature type="chain" id="PRO_0000148452" description="Dihydroorotate dehydrogenase (quinone)">
    <location>
        <begin position="1"/>
        <end position="340"/>
    </location>
</feature>
<feature type="active site" description="Nucleophile" evidence="1">
    <location>
        <position position="178"/>
    </location>
</feature>
<feature type="binding site" evidence="1">
    <location>
        <begin position="65"/>
        <end position="69"/>
    </location>
    <ligand>
        <name>FMN</name>
        <dbReference type="ChEBI" id="CHEBI:58210"/>
    </ligand>
</feature>
<feature type="binding site" evidence="1">
    <location>
        <position position="69"/>
    </location>
    <ligand>
        <name>substrate</name>
    </ligand>
</feature>
<feature type="binding site" evidence="1">
    <location>
        <position position="89"/>
    </location>
    <ligand>
        <name>FMN</name>
        <dbReference type="ChEBI" id="CHEBI:58210"/>
    </ligand>
</feature>
<feature type="binding site" evidence="1">
    <location>
        <begin position="114"/>
        <end position="118"/>
    </location>
    <ligand>
        <name>substrate</name>
    </ligand>
</feature>
<feature type="binding site" evidence="1">
    <location>
        <position position="142"/>
    </location>
    <ligand>
        <name>FMN</name>
        <dbReference type="ChEBI" id="CHEBI:58210"/>
    </ligand>
</feature>
<feature type="binding site" evidence="1">
    <location>
        <position position="175"/>
    </location>
    <ligand>
        <name>FMN</name>
        <dbReference type="ChEBI" id="CHEBI:58210"/>
    </ligand>
</feature>
<feature type="binding site" evidence="1">
    <location>
        <position position="175"/>
    </location>
    <ligand>
        <name>substrate</name>
    </ligand>
</feature>
<feature type="binding site" evidence="1">
    <location>
        <position position="180"/>
    </location>
    <ligand>
        <name>substrate</name>
    </ligand>
</feature>
<feature type="binding site" evidence="1">
    <location>
        <position position="220"/>
    </location>
    <ligand>
        <name>FMN</name>
        <dbReference type="ChEBI" id="CHEBI:58210"/>
    </ligand>
</feature>
<feature type="binding site" evidence="1">
    <location>
        <position position="248"/>
    </location>
    <ligand>
        <name>FMN</name>
        <dbReference type="ChEBI" id="CHEBI:58210"/>
    </ligand>
</feature>
<feature type="binding site" evidence="1">
    <location>
        <begin position="249"/>
        <end position="250"/>
    </location>
    <ligand>
        <name>substrate</name>
    </ligand>
</feature>
<feature type="binding site" evidence="1">
    <location>
        <position position="271"/>
    </location>
    <ligand>
        <name>FMN</name>
        <dbReference type="ChEBI" id="CHEBI:58210"/>
    </ligand>
</feature>
<feature type="binding site" evidence="1">
    <location>
        <position position="300"/>
    </location>
    <ligand>
        <name>FMN</name>
        <dbReference type="ChEBI" id="CHEBI:58210"/>
    </ligand>
</feature>
<feature type="binding site" evidence="1">
    <location>
        <begin position="321"/>
        <end position="322"/>
    </location>
    <ligand>
        <name>FMN</name>
        <dbReference type="ChEBI" id="CHEBI:58210"/>
    </ligand>
</feature>
<name>PYRD_MANSM</name>
<accession>Q65TR8</accession>
<protein>
    <recommendedName>
        <fullName evidence="1">Dihydroorotate dehydrogenase (quinone)</fullName>
        <ecNumber evidence="1">1.3.5.2</ecNumber>
    </recommendedName>
    <alternativeName>
        <fullName evidence="1">DHOdehase</fullName>
        <shortName evidence="1">DHOD</shortName>
        <shortName evidence="1">DHODase</shortName>
    </alternativeName>
    <alternativeName>
        <fullName evidence="1">Dihydroorotate oxidase</fullName>
    </alternativeName>
</protein>
<evidence type="ECO:0000255" key="1">
    <source>
        <dbReference type="HAMAP-Rule" id="MF_00225"/>
    </source>
</evidence>
<organism>
    <name type="scientific">Mannheimia succiniciproducens (strain KCTC 0769BP / MBEL55E)</name>
    <dbReference type="NCBI Taxonomy" id="221988"/>
    <lineage>
        <taxon>Bacteria</taxon>
        <taxon>Pseudomonadati</taxon>
        <taxon>Pseudomonadota</taxon>
        <taxon>Gammaproteobacteria</taxon>
        <taxon>Pasteurellales</taxon>
        <taxon>Pasteurellaceae</taxon>
        <taxon>Basfia</taxon>
    </lineage>
</organism>
<keyword id="KW-1003">Cell membrane</keyword>
<keyword id="KW-0285">Flavoprotein</keyword>
<keyword id="KW-0288">FMN</keyword>
<keyword id="KW-0472">Membrane</keyword>
<keyword id="KW-0560">Oxidoreductase</keyword>
<keyword id="KW-0665">Pyrimidine biosynthesis</keyword>
<gene>
    <name evidence="1" type="primary">pyrD</name>
    <name type="ordered locus">MS1035</name>
</gene>